<name>NDK_CERS5</name>
<proteinExistence type="inferred from homology"/>
<comment type="function">
    <text evidence="1">Major role in the synthesis of nucleoside triphosphates other than ATP. The ATP gamma phosphate is transferred to the NDP beta phosphate via a ping-pong mechanism, using a phosphorylated active-site intermediate.</text>
</comment>
<comment type="catalytic activity">
    <reaction evidence="1">
        <text>a 2'-deoxyribonucleoside 5'-diphosphate + ATP = a 2'-deoxyribonucleoside 5'-triphosphate + ADP</text>
        <dbReference type="Rhea" id="RHEA:44640"/>
        <dbReference type="ChEBI" id="CHEBI:30616"/>
        <dbReference type="ChEBI" id="CHEBI:61560"/>
        <dbReference type="ChEBI" id="CHEBI:73316"/>
        <dbReference type="ChEBI" id="CHEBI:456216"/>
        <dbReference type="EC" id="2.7.4.6"/>
    </reaction>
</comment>
<comment type="catalytic activity">
    <reaction evidence="1">
        <text>a ribonucleoside 5'-diphosphate + ATP = a ribonucleoside 5'-triphosphate + ADP</text>
        <dbReference type="Rhea" id="RHEA:18113"/>
        <dbReference type="ChEBI" id="CHEBI:30616"/>
        <dbReference type="ChEBI" id="CHEBI:57930"/>
        <dbReference type="ChEBI" id="CHEBI:61557"/>
        <dbReference type="ChEBI" id="CHEBI:456216"/>
        <dbReference type="EC" id="2.7.4.6"/>
    </reaction>
</comment>
<comment type="cofactor">
    <cofactor evidence="1">
        <name>Mg(2+)</name>
        <dbReference type="ChEBI" id="CHEBI:18420"/>
    </cofactor>
</comment>
<comment type="subunit">
    <text evidence="1">Homotetramer.</text>
</comment>
<comment type="subcellular location">
    <subcellularLocation>
        <location evidence="1">Cytoplasm</location>
    </subcellularLocation>
</comment>
<comment type="similarity">
    <text evidence="1">Belongs to the NDK family.</text>
</comment>
<evidence type="ECO:0000255" key="1">
    <source>
        <dbReference type="HAMAP-Rule" id="MF_00451"/>
    </source>
</evidence>
<sequence>MAIERTLSIIKPDATRRNLTGKINAKFEDAGLRIVAQKRIHLSLAQAQKFYGVHKDRPFFGELTEFMASEPVVVQVLEGEGAIAKNREVMGATNPANADEGTIRKEFALSVGENSVHGSDAPETAAEEIAFFFSGLELVG</sequence>
<feature type="chain" id="PRO_1000026284" description="Nucleoside diphosphate kinase">
    <location>
        <begin position="1"/>
        <end position="140"/>
    </location>
</feature>
<feature type="active site" description="Pros-phosphohistidine intermediate" evidence="1">
    <location>
        <position position="117"/>
    </location>
</feature>
<feature type="binding site" evidence="1">
    <location>
        <position position="11"/>
    </location>
    <ligand>
        <name>ATP</name>
        <dbReference type="ChEBI" id="CHEBI:30616"/>
    </ligand>
</feature>
<feature type="binding site" evidence="1">
    <location>
        <position position="59"/>
    </location>
    <ligand>
        <name>ATP</name>
        <dbReference type="ChEBI" id="CHEBI:30616"/>
    </ligand>
</feature>
<feature type="binding site" evidence="1">
    <location>
        <position position="87"/>
    </location>
    <ligand>
        <name>ATP</name>
        <dbReference type="ChEBI" id="CHEBI:30616"/>
    </ligand>
</feature>
<feature type="binding site" evidence="1">
    <location>
        <position position="93"/>
    </location>
    <ligand>
        <name>ATP</name>
        <dbReference type="ChEBI" id="CHEBI:30616"/>
    </ligand>
</feature>
<feature type="binding site" evidence="1">
    <location>
        <position position="104"/>
    </location>
    <ligand>
        <name>ATP</name>
        <dbReference type="ChEBI" id="CHEBI:30616"/>
    </ligand>
</feature>
<feature type="binding site" evidence="1">
    <location>
        <position position="114"/>
    </location>
    <ligand>
        <name>ATP</name>
        <dbReference type="ChEBI" id="CHEBI:30616"/>
    </ligand>
</feature>
<organism>
    <name type="scientific">Cereibacter sphaeroides (strain ATCC 17025 / ATH 2.4.3)</name>
    <name type="common">Rhodobacter sphaeroides</name>
    <dbReference type="NCBI Taxonomy" id="349102"/>
    <lineage>
        <taxon>Bacteria</taxon>
        <taxon>Pseudomonadati</taxon>
        <taxon>Pseudomonadota</taxon>
        <taxon>Alphaproteobacteria</taxon>
        <taxon>Rhodobacterales</taxon>
        <taxon>Paracoccaceae</taxon>
        <taxon>Cereibacter</taxon>
    </lineage>
</organism>
<gene>
    <name evidence="1" type="primary">ndk</name>
    <name type="ordered locus">Rsph17025_1127</name>
</gene>
<protein>
    <recommendedName>
        <fullName evidence="1">Nucleoside diphosphate kinase</fullName>
        <shortName evidence="1">NDK</shortName>
        <shortName evidence="1">NDP kinase</shortName>
        <ecNumber evidence="1">2.7.4.6</ecNumber>
    </recommendedName>
    <alternativeName>
        <fullName evidence="1">Nucleoside-2-P kinase</fullName>
    </alternativeName>
</protein>
<dbReference type="EC" id="2.7.4.6" evidence="1"/>
<dbReference type="EMBL" id="CP000661">
    <property type="protein sequence ID" value="ABP70028.1"/>
    <property type="molecule type" value="Genomic_DNA"/>
</dbReference>
<dbReference type="SMR" id="A4WRL4"/>
<dbReference type="STRING" id="349102.Rsph17025_1127"/>
<dbReference type="KEGG" id="rsq:Rsph17025_1127"/>
<dbReference type="eggNOG" id="COG0105">
    <property type="taxonomic scope" value="Bacteria"/>
</dbReference>
<dbReference type="HOGENOM" id="CLU_060216_8_1_5"/>
<dbReference type="BioCyc" id="RSPH349102:G1G8M-1154-MONOMER"/>
<dbReference type="GO" id="GO:0005737">
    <property type="term" value="C:cytoplasm"/>
    <property type="evidence" value="ECO:0007669"/>
    <property type="project" value="UniProtKB-SubCell"/>
</dbReference>
<dbReference type="GO" id="GO:0005524">
    <property type="term" value="F:ATP binding"/>
    <property type="evidence" value="ECO:0007669"/>
    <property type="project" value="UniProtKB-UniRule"/>
</dbReference>
<dbReference type="GO" id="GO:0046872">
    <property type="term" value="F:metal ion binding"/>
    <property type="evidence" value="ECO:0007669"/>
    <property type="project" value="UniProtKB-KW"/>
</dbReference>
<dbReference type="GO" id="GO:0004550">
    <property type="term" value="F:nucleoside diphosphate kinase activity"/>
    <property type="evidence" value="ECO:0007669"/>
    <property type="project" value="UniProtKB-UniRule"/>
</dbReference>
<dbReference type="GO" id="GO:0006241">
    <property type="term" value="P:CTP biosynthetic process"/>
    <property type="evidence" value="ECO:0007669"/>
    <property type="project" value="UniProtKB-UniRule"/>
</dbReference>
<dbReference type="GO" id="GO:0006183">
    <property type="term" value="P:GTP biosynthetic process"/>
    <property type="evidence" value="ECO:0007669"/>
    <property type="project" value="UniProtKB-UniRule"/>
</dbReference>
<dbReference type="GO" id="GO:0006228">
    <property type="term" value="P:UTP biosynthetic process"/>
    <property type="evidence" value="ECO:0007669"/>
    <property type="project" value="UniProtKB-UniRule"/>
</dbReference>
<dbReference type="CDD" id="cd04413">
    <property type="entry name" value="NDPk_I"/>
    <property type="match status" value="1"/>
</dbReference>
<dbReference type="FunFam" id="3.30.70.141:FF:000003">
    <property type="entry name" value="Nucleoside diphosphate kinase"/>
    <property type="match status" value="1"/>
</dbReference>
<dbReference type="Gene3D" id="3.30.70.141">
    <property type="entry name" value="Nucleoside diphosphate kinase-like domain"/>
    <property type="match status" value="1"/>
</dbReference>
<dbReference type="HAMAP" id="MF_00451">
    <property type="entry name" value="NDP_kinase"/>
    <property type="match status" value="1"/>
</dbReference>
<dbReference type="InterPro" id="IPR034907">
    <property type="entry name" value="NDK-like_dom"/>
</dbReference>
<dbReference type="InterPro" id="IPR036850">
    <property type="entry name" value="NDK-like_dom_sf"/>
</dbReference>
<dbReference type="InterPro" id="IPR001564">
    <property type="entry name" value="Nucleoside_diP_kinase"/>
</dbReference>
<dbReference type="InterPro" id="IPR023005">
    <property type="entry name" value="Nucleoside_diP_kinase_AS"/>
</dbReference>
<dbReference type="NCBIfam" id="NF001908">
    <property type="entry name" value="PRK00668.1"/>
    <property type="match status" value="1"/>
</dbReference>
<dbReference type="PANTHER" id="PTHR46161">
    <property type="entry name" value="NUCLEOSIDE DIPHOSPHATE KINASE"/>
    <property type="match status" value="1"/>
</dbReference>
<dbReference type="PANTHER" id="PTHR46161:SF3">
    <property type="entry name" value="NUCLEOSIDE DIPHOSPHATE KINASE DDB_G0292928-RELATED"/>
    <property type="match status" value="1"/>
</dbReference>
<dbReference type="Pfam" id="PF00334">
    <property type="entry name" value="NDK"/>
    <property type="match status" value="1"/>
</dbReference>
<dbReference type="PRINTS" id="PR01243">
    <property type="entry name" value="NUCDPKINASE"/>
</dbReference>
<dbReference type="SMART" id="SM00562">
    <property type="entry name" value="NDK"/>
    <property type="match status" value="1"/>
</dbReference>
<dbReference type="SUPFAM" id="SSF54919">
    <property type="entry name" value="Nucleoside diphosphate kinase, NDK"/>
    <property type="match status" value="1"/>
</dbReference>
<dbReference type="PROSITE" id="PS00469">
    <property type="entry name" value="NDPK"/>
    <property type="match status" value="1"/>
</dbReference>
<dbReference type="PROSITE" id="PS51374">
    <property type="entry name" value="NDPK_LIKE"/>
    <property type="match status" value="1"/>
</dbReference>
<accession>A4WRL4</accession>
<reference key="1">
    <citation type="submission" date="2007-04" db="EMBL/GenBank/DDBJ databases">
        <title>Complete sequence of chromosome of Rhodobacter sphaeroides ATCC 17025.</title>
        <authorList>
            <consortium name="US DOE Joint Genome Institute"/>
            <person name="Copeland A."/>
            <person name="Lucas S."/>
            <person name="Lapidus A."/>
            <person name="Barry K."/>
            <person name="Detter J.C."/>
            <person name="Glavina del Rio T."/>
            <person name="Hammon N."/>
            <person name="Israni S."/>
            <person name="Dalin E."/>
            <person name="Tice H."/>
            <person name="Pitluck S."/>
            <person name="Chertkov O."/>
            <person name="Brettin T."/>
            <person name="Bruce D."/>
            <person name="Han C."/>
            <person name="Schmutz J."/>
            <person name="Larimer F."/>
            <person name="Land M."/>
            <person name="Hauser L."/>
            <person name="Kyrpides N."/>
            <person name="Kim E."/>
            <person name="Richardson P."/>
            <person name="Mackenzie C."/>
            <person name="Choudhary M."/>
            <person name="Donohue T.J."/>
            <person name="Kaplan S."/>
        </authorList>
    </citation>
    <scope>NUCLEOTIDE SEQUENCE [LARGE SCALE GENOMIC DNA]</scope>
    <source>
        <strain>ATCC 17025 / ATH 2.4.3</strain>
    </source>
</reference>
<keyword id="KW-0067">ATP-binding</keyword>
<keyword id="KW-0963">Cytoplasm</keyword>
<keyword id="KW-0418">Kinase</keyword>
<keyword id="KW-0460">Magnesium</keyword>
<keyword id="KW-0479">Metal-binding</keyword>
<keyword id="KW-0546">Nucleotide metabolism</keyword>
<keyword id="KW-0547">Nucleotide-binding</keyword>
<keyword id="KW-0597">Phosphoprotein</keyword>
<keyword id="KW-0808">Transferase</keyword>